<name>YFEC_YERPE</name>
<proteinExistence type="inferred from homology"/>
<reference key="1">
    <citation type="journal article" date="1998" name="J. Bacteriol.">
        <title>An ABC transporter system of Yersinia pestis allows utilization of chelated iron by Escherichia coli SAB11.</title>
        <authorList>
            <person name="Bearden S.W."/>
            <person name="Staggs T.M."/>
            <person name="Perry R.D."/>
        </authorList>
    </citation>
    <scope>NUCLEOTIDE SEQUENCE [GENOMIC DNA]</scope>
    <source>
        <strain>KIM6</strain>
    </source>
</reference>
<reference key="2">
    <citation type="journal article" date="2001" name="Nature">
        <title>Genome sequence of Yersinia pestis, the causative agent of plague.</title>
        <authorList>
            <person name="Parkhill J."/>
            <person name="Wren B.W."/>
            <person name="Thomson N.R."/>
            <person name="Titball R.W."/>
            <person name="Holden M.T.G."/>
            <person name="Prentice M.B."/>
            <person name="Sebaihia M."/>
            <person name="James K.D."/>
            <person name="Churcher C.M."/>
            <person name="Mungall K.L."/>
            <person name="Baker S."/>
            <person name="Basham D."/>
            <person name="Bentley S.D."/>
            <person name="Brooks K."/>
            <person name="Cerdeno-Tarraga A.-M."/>
            <person name="Chillingworth T."/>
            <person name="Cronin A."/>
            <person name="Davies R.M."/>
            <person name="Davis P."/>
            <person name="Dougan G."/>
            <person name="Feltwell T."/>
            <person name="Hamlin N."/>
            <person name="Holroyd S."/>
            <person name="Jagels K."/>
            <person name="Karlyshev A.V."/>
            <person name="Leather S."/>
            <person name="Moule S."/>
            <person name="Oyston P.C.F."/>
            <person name="Quail M.A."/>
            <person name="Rutherford K.M."/>
            <person name="Simmonds M."/>
            <person name="Skelton J."/>
            <person name="Stevens K."/>
            <person name="Whitehead S."/>
            <person name="Barrell B.G."/>
        </authorList>
    </citation>
    <scope>NUCLEOTIDE SEQUENCE [LARGE SCALE GENOMIC DNA]</scope>
    <source>
        <strain>CO-92 / Biovar Orientalis</strain>
    </source>
</reference>
<reference key="3">
    <citation type="journal article" date="2002" name="J. Bacteriol.">
        <title>Genome sequence of Yersinia pestis KIM.</title>
        <authorList>
            <person name="Deng W."/>
            <person name="Burland V."/>
            <person name="Plunkett G. III"/>
            <person name="Boutin A."/>
            <person name="Mayhew G.F."/>
            <person name="Liss P."/>
            <person name="Perna N.T."/>
            <person name="Rose D.J."/>
            <person name="Mau B."/>
            <person name="Zhou S."/>
            <person name="Schwartz D.C."/>
            <person name="Fetherston J.D."/>
            <person name="Lindler L.E."/>
            <person name="Brubaker R.R."/>
            <person name="Plano G.V."/>
            <person name="Straley S.C."/>
            <person name="McDonough K.A."/>
            <person name="Nilles M.L."/>
            <person name="Matson J.S."/>
            <person name="Blattner F.R."/>
            <person name="Perry R.D."/>
        </authorList>
    </citation>
    <scope>NUCLEOTIDE SEQUENCE [LARGE SCALE GENOMIC DNA]</scope>
    <source>
        <strain>KIM10+ / Biovar Mediaevalis</strain>
    </source>
</reference>
<reference key="4">
    <citation type="journal article" date="2004" name="DNA Res.">
        <title>Complete genome sequence of Yersinia pestis strain 91001, an isolate avirulent to humans.</title>
        <authorList>
            <person name="Song Y."/>
            <person name="Tong Z."/>
            <person name="Wang J."/>
            <person name="Wang L."/>
            <person name="Guo Z."/>
            <person name="Han Y."/>
            <person name="Zhang J."/>
            <person name="Pei D."/>
            <person name="Zhou D."/>
            <person name="Qin H."/>
            <person name="Pang X."/>
            <person name="Han Y."/>
            <person name="Zhai J."/>
            <person name="Li M."/>
            <person name="Cui B."/>
            <person name="Qi Z."/>
            <person name="Jin L."/>
            <person name="Dai R."/>
            <person name="Chen F."/>
            <person name="Li S."/>
            <person name="Ye C."/>
            <person name="Du Z."/>
            <person name="Lin W."/>
            <person name="Wang J."/>
            <person name="Yu J."/>
            <person name="Yang H."/>
            <person name="Wang J."/>
            <person name="Huang P."/>
            <person name="Yang R."/>
        </authorList>
    </citation>
    <scope>NUCLEOTIDE SEQUENCE [LARGE SCALE GENOMIC DNA]</scope>
    <source>
        <strain>91001 / Biovar Mediaevalis</strain>
    </source>
</reference>
<sequence>MLELLLQPFNYNYMVKAIWVSAIVGAVCAFLSAYLMLKGWSLMGDALSHSVVPGVAGAYALGFPYAAGAFFTGMLAALAMTLVRHITRLREDAIIGFIFSTFFAVGLLIVSLNPTSVNVQSIIFGNILGIADEDVLQVEIIILVSFVILCLIWKDLLAVFFDESHAMSIGLSPLRLKILFFTLLSACTVAALQTVGAILVIAMVVTPGATAYLLTDRFGRLLIIAIAIGAITSAFGAYLSFYLDGATGGVIVTLQTLVFLPAFFFAPKHGLLATRYRTRLKRRHPPVHLPEDNL</sequence>
<gene>
    <name type="primary">yfeC</name>
    <name type="ordered locus">YPO2441</name>
    <name type="ordered locus">y1895</name>
    <name type="ordered locus">YP_2229</name>
</gene>
<protein>
    <recommendedName>
        <fullName>Chelated iron transport system membrane protein YfeC</fullName>
    </recommendedName>
</protein>
<comment type="function">
    <text>Part of an ATP-driven transport system YfeABC for chelated iron.</text>
</comment>
<comment type="subcellular location">
    <subcellularLocation>
        <location evidence="2">Cell inner membrane</location>
        <topology evidence="2">Multi-pass membrane protein</topology>
    </subcellularLocation>
</comment>
<comment type="similarity">
    <text evidence="2">Belongs to the ABC-3 integral membrane protein family.</text>
</comment>
<accession>Q56954</accession>
<accession>Q0WE83</accession>
<keyword id="KW-0997">Cell inner membrane</keyword>
<keyword id="KW-1003">Cell membrane</keyword>
<keyword id="KW-0406">Ion transport</keyword>
<keyword id="KW-0408">Iron</keyword>
<keyword id="KW-0410">Iron transport</keyword>
<keyword id="KW-0472">Membrane</keyword>
<keyword id="KW-1185">Reference proteome</keyword>
<keyword id="KW-0812">Transmembrane</keyword>
<keyword id="KW-1133">Transmembrane helix</keyword>
<keyword id="KW-0813">Transport</keyword>
<evidence type="ECO:0000255" key="1"/>
<evidence type="ECO:0000305" key="2"/>
<organism>
    <name type="scientific">Yersinia pestis</name>
    <dbReference type="NCBI Taxonomy" id="632"/>
    <lineage>
        <taxon>Bacteria</taxon>
        <taxon>Pseudomonadati</taxon>
        <taxon>Pseudomonadota</taxon>
        <taxon>Gammaproteobacteria</taxon>
        <taxon>Enterobacterales</taxon>
        <taxon>Yersiniaceae</taxon>
        <taxon>Yersinia</taxon>
    </lineage>
</organism>
<feature type="chain" id="PRO_0000171156" description="Chelated iron transport system membrane protein YfeC">
    <location>
        <begin position="1"/>
        <end position="294"/>
    </location>
</feature>
<feature type="transmembrane region" description="Helical" evidence="1">
    <location>
        <begin position="17"/>
        <end position="37"/>
    </location>
</feature>
<feature type="transmembrane region" description="Helical" evidence="1">
    <location>
        <begin position="51"/>
        <end position="71"/>
    </location>
</feature>
<feature type="transmembrane region" description="Helical" evidence="1">
    <location>
        <begin position="93"/>
        <end position="113"/>
    </location>
</feature>
<feature type="transmembrane region" description="Helical" evidence="1">
    <location>
        <begin position="140"/>
        <end position="160"/>
    </location>
</feature>
<feature type="transmembrane region" description="Helical" evidence="1">
    <location>
        <begin position="169"/>
        <end position="189"/>
    </location>
</feature>
<feature type="transmembrane region" description="Helical" evidence="1">
    <location>
        <begin position="194"/>
        <end position="214"/>
    </location>
</feature>
<feature type="transmembrane region" description="Helical" evidence="1">
    <location>
        <begin position="221"/>
        <end position="241"/>
    </location>
</feature>
<feature type="transmembrane region" description="Helical" evidence="1">
    <location>
        <begin position="246"/>
        <end position="266"/>
    </location>
</feature>
<dbReference type="EMBL" id="U50597">
    <property type="protein sequence ID" value="AAC46149.1"/>
    <property type="molecule type" value="Genomic_DNA"/>
</dbReference>
<dbReference type="EMBL" id="AL590842">
    <property type="protein sequence ID" value="CAL21069.1"/>
    <property type="molecule type" value="Genomic_DNA"/>
</dbReference>
<dbReference type="EMBL" id="AE009952">
    <property type="protein sequence ID" value="AAM85462.1"/>
    <property type="molecule type" value="Genomic_DNA"/>
</dbReference>
<dbReference type="EMBL" id="AE017042">
    <property type="protein sequence ID" value="AAS62435.1"/>
    <property type="molecule type" value="Genomic_DNA"/>
</dbReference>
<dbReference type="PIR" id="AB0298">
    <property type="entry name" value="AB0298"/>
</dbReference>
<dbReference type="RefSeq" id="WP_002211844.1">
    <property type="nucleotide sequence ID" value="NZ_WUCM01000025.1"/>
</dbReference>
<dbReference type="RefSeq" id="YP_002347405.1">
    <property type="nucleotide sequence ID" value="NC_003143.1"/>
</dbReference>
<dbReference type="SMR" id="Q56954"/>
<dbReference type="IntAct" id="Q56954">
    <property type="interactions" value="1"/>
</dbReference>
<dbReference type="STRING" id="214092.YPO2441"/>
<dbReference type="TCDB" id="3.A.1.15.4">
    <property type="family name" value="the atp-binding cassette (abc) superfamily"/>
</dbReference>
<dbReference type="PaxDb" id="214092-YPO2441"/>
<dbReference type="DNASU" id="1146842"/>
<dbReference type="EnsemblBacteria" id="AAS62435">
    <property type="protein sequence ID" value="AAS62435"/>
    <property type="gene ID" value="YP_2229"/>
</dbReference>
<dbReference type="GeneID" id="57976238"/>
<dbReference type="KEGG" id="ype:YPO2441"/>
<dbReference type="KEGG" id="ypk:y1895"/>
<dbReference type="KEGG" id="ypm:YP_2229"/>
<dbReference type="PATRIC" id="fig|214092.21.peg.2852"/>
<dbReference type="eggNOG" id="COG1108">
    <property type="taxonomic scope" value="Bacteria"/>
</dbReference>
<dbReference type="HOGENOM" id="CLU_028808_4_0_6"/>
<dbReference type="OMA" id="WVVLRGM"/>
<dbReference type="OrthoDB" id="9804300at2"/>
<dbReference type="Proteomes" id="UP000000815">
    <property type="component" value="Chromosome"/>
</dbReference>
<dbReference type="Proteomes" id="UP000001019">
    <property type="component" value="Chromosome"/>
</dbReference>
<dbReference type="Proteomes" id="UP000002490">
    <property type="component" value="Chromosome"/>
</dbReference>
<dbReference type="GO" id="GO:0043190">
    <property type="term" value="C:ATP-binding cassette (ABC) transporter complex"/>
    <property type="evidence" value="ECO:0007669"/>
    <property type="project" value="InterPro"/>
</dbReference>
<dbReference type="GO" id="GO:0005886">
    <property type="term" value="C:plasma membrane"/>
    <property type="evidence" value="ECO:0000318"/>
    <property type="project" value="GO_Central"/>
</dbReference>
<dbReference type="GO" id="GO:0071281">
    <property type="term" value="P:cellular response to iron ion"/>
    <property type="evidence" value="ECO:0000269"/>
    <property type="project" value="CollecTF"/>
</dbReference>
<dbReference type="GO" id="GO:0006826">
    <property type="term" value="P:iron ion transport"/>
    <property type="evidence" value="ECO:0007669"/>
    <property type="project" value="UniProtKB-KW"/>
</dbReference>
<dbReference type="GO" id="GO:0010043">
    <property type="term" value="P:response to zinc ion"/>
    <property type="evidence" value="ECO:0000318"/>
    <property type="project" value="GO_Central"/>
</dbReference>
<dbReference type="GO" id="GO:0055085">
    <property type="term" value="P:transmembrane transport"/>
    <property type="evidence" value="ECO:0007669"/>
    <property type="project" value="InterPro"/>
</dbReference>
<dbReference type="CDD" id="cd06550">
    <property type="entry name" value="TM_ABC_iron-siderophores_like"/>
    <property type="match status" value="1"/>
</dbReference>
<dbReference type="FunFam" id="1.10.3470.10:FF:000003">
    <property type="entry name" value="Iron ABC transporter permease SitD"/>
    <property type="match status" value="1"/>
</dbReference>
<dbReference type="Gene3D" id="1.10.3470.10">
    <property type="entry name" value="ABC transporter involved in vitamin B12 uptake, BtuC"/>
    <property type="match status" value="1"/>
</dbReference>
<dbReference type="InterPro" id="IPR037294">
    <property type="entry name" value="ABC_BtuC-like"/>
</dbReference>
<dbReference type="InterPro" id="IPR001626">
    <property type="entry name" value="ABC_TroCD"/>
</dbReference>
<dbReference type="PANTHER" id="PTHR30477">
    <property type="entry name" value="ABC-TRANSPORTER METAL-BINDING PROTEIN"/>
    <property type="match status" value="1"/>
</dbReference>
<dbReference type="PANTHER" id="PTHR30477:SF13">
    <property type="entry name" value="IRON TRANSPORT SYSTEM MEMBRANE PROTEIN HI_0360-RELATED"/>
    <property type="match status" value="1"/>
</dbReference>
<dbReference type="Pfam" id="PF00950">
    <property type="entry name" value="ABC-3"/>
    <property type="match status" value="1"/>
</dbReference>
<dbReference type="SUPFAM" id="SSF81345">
    <property type="entry name" value="ABC transporter involved in vitamin B12 uptake, BtuC"/>
    <property type="match status" value="1"/>
</dbReference>